<sequence length="130" mass="14127">MSMQDPIADMLTRIRNGQAANKAAVTMPSSKLKVAIANVLKEEGFIEDFKVEGDTKPELELTLKYFQGKAVVESIQRVSRPGLRIYKRKDELPKVMAGLGIAVVSTSKGVMTDRAARQAGLGGEIICYVA</sequence>
<comment type="function">
    <text evidence="1">One of the primary rRNA binding proteins, it binds directly to 16S rRNA central domain where it helps coordinate assembly of the platform of the 30S subunit.</text>
</comment>
<comment type="subunit">
    <text evidence="1">Part of the 30S ribosomal subunit. Contacts proteins S5 and S12 (By similarity).</text>
</comment>
<comment type="similarity">
    <text evidence="2">Belongs to the universal ribosomal protein uS8 family.</text>
</comment>
<reference key="1">
    <citation type="journal article" date="2002" name="Nucleic Acids Res.">
        <title>Genome sequence of Shigella flexneri 2a: insights into pathogenicity through comparison with genomes of Escherichia coli K12 and O157.</title>
        <authorList>
            <person name="Jin Q."/>
            <person name="Yuan Z."/>
            <person name="Xu J."/>
            <person name="Wang Y."/>
            <person name="Shen Y."/>
            <person name="Lu W."/>
            <person name="Wang J."/>
            <person name="Liu H."/>
            <person name="Yang J."/>
            <person name="Yang F."/>
            <person name="Zhang X."/>
            <person name="Zhang J."/>
            <person name="Yang G."/>
            <person name="Wu H."/>
            <person name="Qu D."/>
            <person name="Dong J."/>
            <person name="Sun L."/>
            <person name="Xue Y."/>
            <person name="Zhao A."/>
            <person name="Gao Y."/>
            <person name="Zhu J."/>
            <person name="Kan B."/>
            <person name="Ding K."/>
            <person name="Chen S."/>
            <person name="Cheng H."/>
            <person name="Yao Z."/>
            <person name="He B."/>
            <person name="Chen R."/>
            <person name="Ma D."/>
            <person name="Qiang B."/>
            <person name="Wen Y."/>
            <person name="Hou Y."/>
            <person name="Yu J."/>
        </authorList>
    </citation>
    <scope>NUCLEOTIDE SEQUENCE [LARGE SCALE GENOMIC DNA]</scope>
    <source>
        <strain>301 / Serotype 2a</strain>
    </source>
</reference>
<reference key="2">
    <citation type="journal article" date="2003" name="Infect. Immun.">
        <title>Complete genome sequence and comparative genomics of Shigella flexneri serotype 2a strain 2457T.</title>
        <authorList>
            <person name="Wei J."/>
            <person name="Goldberg M.B."/>
            <person name="Burland V."/>
            <person name="Venkatesan M.M."/>
            <person name="Deng W."/>
            <person name="Fournier G."/>
            <person name="Mayhew G.F."/>
            <person name="Plunkett G. III"/>
            <person name="Rose D.J."/>
            <person name="Darling A."/>
            <person name="Mau B."/>
            <person name="Perna N.T."/>
            <person name="Payne S.M."/>
            <person name="Runyen-Janecky L.J."/>
            <person name="Zhou S."/>
            <person name="Schwartz D.C."/>
            <person name="Blattner F.R."/>
        </authorList>
    </citation>
    <scope>NUCLEOTIDE SEQUENCE [LARGE SCALE GENOMIC DNA]</scope>
    <source>
        <strain>ATCC 700930 / 2457T / Serotype 2a</strain>
    </source>
</reference>
<protein>
    <recommendedName>
        <fullName evidence="2">Small ribosomal subunit protein uS8</fullName>
    </recommendedName>
    <alternativeName>
        <fullName>30S ribosomal protein S8</fullName>
    </alternativeName>
</protein>
<accession>P0A7X2</accession>
<accession>P02361</accession>
<evidence type="ECO:0000250" key="1"/>
<evidence type="ECO:0000305" key="2"/>
<feature type="initiator methionine" description="Removed" evidence="1">
    <location>
        <position position="1"/>
    </location>
</feature>
<feature type="chain" id="PRO_0000126481" description="Small ribosomal subunit protein uS8">
    <location>
        <begin position="2"/>
        <end position="130"/>
    </location>
</feature>
<gene>
    <name type="primary">rpsH</name>
    <name type="ordered locus">SF3338</name>
    <name type="ordered locus">S4424</name>
</gene>
<dbReference type="EMBL" id="AE005674">
    <property type="protein sequence ID" value="AAN44801.1"/>
    <property type="molecule type" value="Genomic_DNA"/>
</dbReference>
<dbReference type="EMBL" id="AE014073">
    <property type="protein sequence ID" value="AAP19375.1"/>
    <property type="molecule type" value="Genomic_DNA"/>
</dbReference>
<dbReference type="RefSeq" id="NP_709094.1">
    <property type="nucleotide sequence ID" value="NC_004337.2"/>
</dbReference>
<dbReference type="RefSeq" id="WP_000062611.1">
    <property type="nucleotide sequence ID" value="NZ_WPGW01000088.1"/>
</dbReference>
<dbReference type="SMR" id="P0A7X2"/>
<dbReference type="STRING" id="198214.SF3338"/>
<dbReference type="PaxDb" id="198214-SF3338"/>
<dbReference type="GeneID" id="1026989"/>
<dbReference type="GeneID" id="93778681"/>
<dbReference type="KEGG" id="sfl:SF3338"/>
<dbReference type="KEGG" id="sfx:S4424"/>
<dbReference type="PATRIC" id="fig|198214.7.peg.3947"/>
<dbReference type="HOGENOM" id="CLU_098428_0_0_6"/>
<dbReference type="Proteomes" id="UP000001006">
    <property type="component" value="Chromosome"/>
</dbReference>
<dbReference type="Proteomes" id="UP000002673">
    <property type="component" value="Chromosome"/>
</dbReference>
<dbReference type="GO" id="GO:1990904">
    <property type="term" value="C:ribonucleoprotein complex"/>
    <property type="evidence" value="ECO:0007669"/>
    <property type="project" value="UniProtKB-KW"/>
</dbReference>
<dbReference type="GO" id="GO:0005840">
    <property type="term" value="C:ribosome"/>
    <property type="evidence" value="ECO:0007669"/>
    <property type="project" value="UniProtKB-KW"/>
</dbReference>
<dbReference type="GO" id="GO:0019843">
    <property type="term" value="F:rRNA binding"/>
    <property type="evidence" value="ECO:0007669"/>
    <property type="project" value="UniProtKB-UniRule"/>
</dbReference>
<dbReference type="GO" id="GO:0003735">
    <property type="term" value="F:structural constituent of ribosome"/>
    <property type="evidence" value="ECO:0007669"/>
    <property type="project" value="InterPro"/>
</dbReference>
<dbReference type="GO" id="GO:0006412">
    <property type="term" value="P:translation"/>
    <property type="evidence" value="ECO:0007669"/>
    <property type="project" value="UniProtKB-UniRule"/>
</dbReference>
<dbReference type="FunFam" id="3.30.1370.30:FF:000003">
    <property type="entry name" value="30S ribosomal protein S8"/>
    <property type="match status" value="1"/>
</dbReference>
<dbReference type="FunFam" id="3.30.1490.10:FF:000001">
    <property type="entry name" value="30S ribosomal protein S8"/>
    <property type="match status" value="1"/>
</dbReference>
<dbReference type="Gene3D" id="3.30.1370.30">
    <property type="match status" value="1"/>
</dbReference>
<dbReference type="Gene3D" id="3.30.1490.10">
    <property type="match status" value="1"/>
</dbReference>
<dbReference type="HAMAP" id="MF_01302_B">
    <property type="entry name" value="Ribosomal_uS8_B"/>
    <property type="match status" value="1"/>
</dbReference>
<dbReference type="InterPro" id="IPR000630">
    <property type="entry name" value="Ribosomal_uS8"/>
</dbReference>
<dbReference type="InterPro" id="IPR047863">
    <property type="entry name" value="Ribosomal_uS8_CS"/>
</dbReference>
<dbReference type="InterPro" id="IPR035987">
    <property type="entry name" value="Ribosomal_uS8_sf"/>
</dbReference>
<dbReference type="NCBIfam" id="NF001109">
    <property type="entry name" value="PRK00136.1"/>
    <property type="match status" value="1"/>
</dbReference>
<dbReference type="PANTHER" id="PTHR11758">
    <property type="entry name" value="40S RIBOSOMAL PROTEIN S15A"/>
    <property type="match status" value="1"/>
</dbReference>
<dbReference type="Pfam" id="PF00410">
    <property type="entry name" value="Ribosomal_S8"/>
    <property type="match status" value="1"/>
</dbReference>
<dbReference type="SUPFAM" id="SSF56047">
    <property type="entry name" value="Ribosomal protein S8"/>
    <property type="match status" value="1"/>
</dbReference>
<dbReference type="PROSITE" id="PS00053">
    <property type="entry name" value="RIBOSOMAL_S8"/>
    <property type="match status" value="1"/>
</dbReference>
<keyword id="KW-1185">Reference proteome</keyword>
<keyword id="KW-0687">Ribonucleoprotein</keyword>
<keyword id="KW-0689">Ribosomal protein</keyword>
<keyword id="KW-0694">RNA-binding</keyword>
<keyword id="KW-0699">rRNA-binding</keyword>
<name>RS8_SHIFL</name>
<proteinExistence type="inferred from homology"/>
<organism>
    <name type="scientific">Shigella flexneri</name>
    <dbReference type="NCBI Taxonomy" id="623"/>
    <lineage>
        <taxon>Bacteria</taxon>
        <taxon>Pseudomonadati</taxon>
        <taxon>Pseudomonadota</taxon>
        <taxon>Gammaproteobacteria</taxon>
        <taxon>Enterobacterales</taxon>
        <taxon>Enterobacteriaceae</taxon>
        <taxon>Shigella</taxon>
    </lineage>
</organism>